<comment type="function">
    <text evidence="1">Catalyzes the reversible oxidation of malate to oxaloacetate.</text>
</comment>
<comment type="catalytic activity">
    <reaction>
        <text>(S)-malate + NAD(+) = oxaloacetate + NADH + H(+)</text>
        <dbReference type="Rhea" id="RHEA:21432"/>
        <dbReference type="ChEBI" id="CHEBI:15378"/>
        <dbReference type="ChEBI" id="CHEBI:15589"/>
        <dbReference type="ChEBI" id="CHEBI:16452"/>
        <dbReference type="ChEBI" id="CHEBI:57540"/>
        <dbReference type="ChEBI" id="CHEBI:57945"/>
        <dbReference type="EC" id="1.1.1.37"/>
    </reaction>
</comment>
<comment type="subunit">
    <text evidence="1">Homodimer.</text>
</comment>
<comment type="similarity">
    <text evidence="2">Belongs to the LDH/MDH superfamily. MDH type 2 family.</text>
</comment>
<sequence>MEQAILRINNISSQLTGKCPFKAHGGGAGKCPYKLGGGQILDQSKAWSLVNVTANVDQVTPIKVLVTGAAGQIAYSLMFMIASGQMFGPHQPVILHLLDIPKMADALKGVVMELQDCSYPLLQSVVATTDIQTAFLHINVAILVGAFPRGPGMQRKDLLKVNVSIFKEQGEALNKYASRGVKVLVVGNPANTNALTALMKASDLPTSNFSALTRLDQNRAQSMISEKVGTNVDNVHNVIIWGNHSQTQVPDVNHGYILNYPNRGLIEPIPSSVNDDKWLNEQFIPLVQNRGATVIAARKLSSAASAANAIVGHVRDWLLGTKDGEHVSMAVYSDGSYNVPKGLIFSFPVTCHNGQWTIVQGLKINSSTQQKIDATIKELQEEKETAMSFLN</sequence>
<reference key="1">
    <citation type="journal article" date="2005" name="Nature">
        <title>The genome of the social amoeba Dictyostelium discoideum.</title>
        <authorList>
            <person name="Eichinger L."/>
            <person name="Pachebat J.A."/>
            <person name="Gloeckner G."/>
            <person name="Rajandream M.A."/>
            <person name="Sucgang R."/>
            <person name="Berriman M."/>
            <person name="Song J."/>
            <person name="Olsen R."/>
            <person name="Szafranski K."/>
            <person name="Xu Q."/>
            <person name="Tunggal B."/>
            <person name="Kummerfeld S."/>
            <person name="Madera M."/>
            <person name="Konfortov B.A."/>
            <person name="Rivero F."/>
            <person name="Bankier A.T."/>
            <person name="Lehmann R."/>
            <person name="Hamlin N."/>
            <person name="Davies R."/>
            <person name="Gaudet P."/>
            <person name="Fey P."/>
            <person name="Pilcher K."/>
            <person name="Chen G."/>
            <person name="Saunders D."/>
            <person name="Sodergren E.J."/>
            <person name="Davis P."/>
            <person name="Kerhornou A."/>
            <person name="Nie X."/>
            <person name="Hall N."/>
            <person name="Anjard C."/>
            <person name="Hemphill L."/>
            <person name="Bason N."/>
            <person name="Farbrother P."/>
            <person name="Desany B."/>
            <person name="Just E."/>
            <person name="Morio T."/>
            <person name="Rost R."/>
            <person name="Churcher C.M."/>
            <person name="Cooper J."/>
            <person name="Haydock S."/>
            <person name="van Driessche N."/>
            <person name="Cronin A."/>
            <person name="Goodhead I."/>
            <person name="Muzny D.M."/>
            <person name="Mourier T."/>
            <person name="Pain A."/>
            <person name="Lu M."/>
            <person name="Harper D."/>
            <person name="Lindsay R."/>
            <person name="Hauser H."/>
            <person name="James K.D."/>
            <person name="Quiles M."/>
            <person name="Madan Babu M."/>
            <person name="Saito T."/>
            <person name="Buchrieser C."/>
            <person name="Wardroper A."/>
            <person name="Felder M."/>
            <person name="Thangavelu M."/>
            <person name="Johnson D."/>
            <person name="Knights A."/>
            <person name="Loulseged H."/>
            <person name="Mungall K.L."/>
            <person name="Oliver K."/>
            <person name="Price C."/>
            <person name="Quail M.A."/>
            <person name="Urushihara H."/>
            <person name="Hernandez J."/>
            <person name="Rabbinowitsch E."/>
            <person name="Steffen D."/>
            <person name="Sanders M."/>
            <person name="Ma J."/>
            <person name="Kohara Y."/>
            <person name="Sharp S."/>
            <person name="Simmonds M.N."/>
            <person name="Spiegler S."/>
            <person name="Tivey A."/>
            <person name="Sugano S."/>
            <person name="White B."/>
            <person name="Walker D."/>
            <person name="Woodward J.R."/>
            <person name="Winckler T."/>
            <person name="Tanaka Y."/>
            <person name="Shaulsky G."/>
            <person name="Schleicher M."/>
            <person name="Weinstock G.M."/>
            <person name="Rosenthal A."/>
            <person name="Cox E.C."/>
            <person name="Chisholm R.L."/>
            <person name="Gibbs R.A."/>
            <person name="Loomis W.F."/>
            <person name="Platzer M."/>
            <person name="Kay R.R."/>
            <person name="Williams J.G."/>
            <person name="Dear P.H."/>
            <person name="Noegel A.A."/>
            <person name="Barrell B.G."/>
            <person name="Kuspa A."/>
        </authorList>
    </citation>
    <scope>NUCLEOTIDE SEQUENCE [LARGE SCALE GENOMIC DNA]</scope>
    <source>
        <strain>AX4</strain>
    </source>
</reference>
<reference key="2">
    <citation type="submission" date="2010-01" db="UniProtKB">
        <authorList>
            <person name="Bienvenut W.V."/>
            <person name="Veltman D.M."/>
            <person name="Insall R.H."/>
        </authorList>
    </citation>
    <scope>PROTEIN SEQUENCE OF 35-45 AND 201-214</scope>
    <scope>IDENTIFICATION BY MASS SPECTROMETRY</scope>
</reference>
<keyword id="KW-0903">Direct protein sequencing</keyword>
<keyword id="KW-0520">NAD</keyword>
<keyword id="KW-0560">Oxidoreductase</keyword>
<keyword id="KW-1185">Reference proteome</keyword>
<keyword id="KW-0816">Tricarboxylic acid cycle</keyword>
<protein>
    <recommendedName>
        <fullName>Probable malate dehydrogenase 1</fullName>
        <ecNumber>1.1.1.37</ecNumber>
    </recommendedName>
</protein>
<organism>
    <name type="scientific">Dictyostelium discoideum</name>
    <name type="common">Social amoeba</name>
    <dbReference type="NCBI Taxonomy" id="44689"/>
    <lineage>
        <taxon>Eukaryota</taxon>
        <taxon>Amoebozoa</taxon>
        <taxon>Evosea</taxon>
        <taxon>Eumycetozoa</taxon>
        <taxon>Dictyostelia</taxon>
        <taxon>Dictyosteliales</taxon>
        <taxon>Dictyosteliaceae</taxon>
        <taxon>Dictyostelium</taxon>
    </lineage>
</organism>
<name>MDHA_DICDI</name>
<dbReference type="EC" id="1.1.1.37"/>
<dbReference type="EMBL" id="AAFI02000161">
    <property type="protein sequence ID" value="EAL62325.1"/>
    <property type="molecule type" value="Genomic_DNA"/>
</dbReference>
<dbReference type="RefSeq" id="XP_635832.1">
    <property type="nucleotide sequence ID" value="XM_630740.1"/>
</dbReference>
<dbReference type="SMR" id="Q54GE6"/>
<dbReference type="FunCoup" id="Q54GE6">
    <property type="interactions" value="244"/>
</dbReference>
<dbReference type="STRING" id="44689.Q54GE6"/>
<dbReference type="PaxDb" id="44689-DDB0230186"/>
<dbReference type="EnsemblProtists" id="EAL62325">
    <property type="protein sequence ID" value="EAL62325"/>
    <property type="gene ID" value="DDB_G0290207"/>
</dbReference>
<dbReference type="GeneID" id="8627540"/>
<dbReference type="KEGG" id="ddi:DDB_G0290207"/>
<dbReference type="dictyBase" id="DDB_G0290207">
    <property type="gene designation" value="mdhA"/>
</dbReference>
<dbReference type="VEuPathDB" id="AmoebaDB:DDB_G0290207"/>
<dbReference type="eggNOG" id="KOG1496">
    <property type="taxonomic scope" value="Eukaryota"/>
</dbReference>
<dbReference type="HOGENOM" id="CLU_040727_2_0_1"/>
<dbReference type="InParanoid" id="Q54GE6"/>
<dbReference type="OMA" id="HTWVNGT"/>
<dbReference type="PhylomeDB" id="Q54GE6"/>
<dbReference type="Reactome" id="R-DDI-9856872">
    <property type="pathway name" value="Malate-aspartate shuttle"/>
</dbReference>
<dbReference type="PRO" id="PR:Q54GE6"/>
<dbReference type="Proteomes" id="UP000002195">
    <property type="component" value="Chromosome 5"/>
</dbReference>
<dbReference type="GO" id="GO:0030060">
    <property type="term" value="F:L-malate dehydrogenase (NAD+) activity"/>
    <property type="evidence" value="ECO:0000318"/>
    <property type="project" value="GO_Central"/>
</dbReference>
<dbReference type="GO" id="GO:0006108">
    <property type="term" value="P:malate metabolic process"/>
    <property type="evidence" value="ECO:0000318"/>
    <property type="project" value="GO_Central"/>
</dbReference>
<dbReference type="GO" id="GO:0006734">
    <property type="term" value="P:NADH metabolic process"/>
    <property type="evidence" value="ECO:0000318"/>
    <property type="project" value="GO_Central"/>
</dbReference>
<dbReference type="GO" id="GO:0006107">
    <property type="term" value="P:oxaloacetate metabolic process"/>
    <property type="evidence" value="ECO:0000318"/>
    <property type="project" value="GO_Central"/>
</dbReference>
<dbReference type="GO" id="GO:0006099">
    <property type="term" value="P:tricarboxylic acid cycle"/>
    <property type="evidence" value="ECO:0000318"/>
    <property type="project" value="GO_Central"/>
</dbReference>
<dbReference type="CDD" id="cd01336">
    <property type="entry name" value="MDH_cytoplasmic_cytosolic"/>
    <property type="match status" value="1"/>
</dbReference>
<dbReference type="FunFam" id="3.40.50.720:FF:000010">
    <property type="entry name" value="Malate dehydrogenase"/>
    <property type="match status" value="1"/>
</dbReference>
<dbReference type="FunFam" id="3.90.110.10:FF:000002">
    <property type="entry name" value="Malate dehydrogenase"/>
    <property type="match status" value="1"/>
</dbReference>
<dbReference type="Gene3D" id="3.90.110.10">
    <property type="entry name" value="Lactate dehydrogenase/glycoside hydrolase, family 4, C-terminal"/>
    <property type="match status" value="1"/>
</dbReference>
<dbReference type="Gene3D" id="3.40.50.720">
    <property type="entry name" value="NAD(P)-binding Rossmann-like Domain"/>
    <property type="match status" value="1"/>
</dbReference>
<dbReference type="HAMAP" id="MF_01517">
    <property type="entry name" value="Malate_dehydrog_2"/>
    <property type="match status" value="1"/>
</dbReference>
<dbReference type="InterPro" id="IPR001557">
    <property type="entry name" value="L-lactate/malate_DH"/>
</dbReference>
<dbReference type="InterPro" id="IPR022383">
    <property type="entry name" value="Lactate/malate_DH_C"/>
</dbReference>
<dbReference type="InterPro" id="IPR001236">
    <property type="entry name" value="Lactate/malate_DH_N"/>
</dbReference>
<dbReference type="InterPro" id="IPR015955">
    <property type="entry name" value="Lactate_DH/Glyco_Ohase_4_C"/>
</dbReference>
<dbReference type="InterPro" id="IPR001252">
    <property type="entry name" value="Malate_DH_AS"/>
</dbReference>
<dbReference type="InterPro" id="IPR011274">
    <property type="entry name" value="Malate_DH_NAD-dep_euk"/>
</dbReference>
<dbReference type="InterPro" id="IPR010945">
    <property type="entry name" value="Malate_DH_type2"/>
</dbReference>
<dbReference type="InterPro" id="IPR036291">
    <property type="entry name" value="NAD(P)-bd_dom_sf"/>
</dbReference>
<dbReference type="NCBIfam" id="TIGR01759">
    <property type="entry name" value="MalateDH-SF1"/>
    <property type="match status" value="1"/>
</dbReference>
<dbReference type="NCBIfam" id="TIGR01758">
    <property type="entry name" value="MDH_euk_cyt"/>
    <property type="match status" value="1"/>
</dbReference>
<dbReference type="NCBIfam" id="NF003916">
    <property type="entry name" value="PRK05442.1"/>
    <property type="match status" value="1"/>
</dbReference>
<dbReference type="PANTHER" id="PTHR23382">
    <property type="entry name" value="MALATE DEHYDROGENASE"/>
    <property type="match status" value="1"/>
</dbReference>
<dbReference type="Pfam" id="PF02866">
    <property type="entry name" value="Ldh_1_C"/>
    <property type="match status" value="1"/>
</dbReference>
<dbReference type="Pfam" id="PF00056">
    <property type="entry name" value="Ldh_1_N"/>
    <property type="match status" value="1"/>
</dbReference>
<dbReference type="PIRSF" id="PIRSF000102">
    <property type="entry name" value="Lac_mal_DH"/>
    <property type="match status" value="1"/>
</dbReference>
<dbReference type="SUPFAM" id="SSF56327">
    <property type="entry name" value="LDH C-terminal domain-like"/>
    <property type="match status" value="1"/>
</dbReference>
<dbReference type="SUPFAM" id="SSF51735">
    <property type="entry name" value="NAD(P)-binding Rossmann-fold domains"/>
    <property type="match status" value="1"/>
</dbReference>
<dbReference type="PROSITE" id="PS00068">
    <property type="entry name" value="MDH"/>
    <property type="match status" value="1"/>
</dbReference>
<feature type="chain" id="PRO_0000312365" description="Probable malate dehydrogenase 1">
    <location>
        <begin position="1"/>
        <end position="391"/>
    </location>
</feature>
<feature type="active site" description="Proton acceptor" evidence="1">
    <location>
        <position position="244"/>
    </location>
</feature>
<feature type="binding site" evidence="1">
    <location>
        <begin position="68"/>
        <end position="74"/>
    </location>
    <ligand>
        <name>NAD(+)</name>
        <dbReference type="ChEBI" id="CHEBI:57540"/>
    </ligand>
</feature>
<feature type="binding site" evidence="1">
    <location>
        <position position="149"/>
    </location>
    <ligand>
        <name>substrate</name>
    </ligand>
</feature>
<feature type="binding site" evidence="1">
    <location>
        <position position="155"/>
    </location>
    <ligand>
        <name>substrate</name>
    </ligand>
</feature>
<feature type="binding site" evidence="1">
    <location>
        <position position="162"/>
    </location>
    <ligand>
        <name>NAD(+)</name>
        <dbReference type="ChEBI" id="CHEBI:57540"/>
    </ligand>
</feature>
<feature type="binding site" evidence="1">
    <location>
        <position position="169"/>
    </location>
    <ligand>
        <name>NAD(+)</name>
        <dbReference type="ChEBI" id="CHEBI:57540"/>
    </ligand>
</feature>
<feature type="binding site" evidence="1">
    <location>
        <begin position="186"/>
        <end position="188"/>
    </location>
    <ligand>
        <name>NAD(+)</name>
        <dbReference type="ChEBI" id="CHEBI:57540"/>
    </ligand>
</feature>
<feature type="binding site" evidence="1">
    <location>
        <position position="188"/>
    </location>
    <ligand>
        <name>substrate</name>
    </ligand>
</feature>
<feature type="binding site" evidence="1">
    <location>
        <position position="219"/>
    </location>
    <ligand>
        <name>substrate</name>
    </ligand>
</feature>
<accession>Q54GE6</accession>
<gene>
    <name type="primary">mdhA</name>
    <name type="ORF">DDB_G0290207</name>
</gene>
<evidence type="ECO:0000250" key="1"/>
<evidence type="ECO:0000305" key="2"/>
<proteinExistence type="evidence at protein level"/>